<gene>
    <name evidence="1" type="primary">miaA</name>
    <name type="ordered locus">SPG_0612</name>
</gene>
<accession>B5E2R3</accession>
<comment type="function">
    <text evidence="1">Catalyzes the transfer of a dimethylallyl group onto the adenine at position 37 in tRNAs that read codons beginning with uridine, leading to the formation of N6-(dimethylallyl)adenosine (i(6)A).</text>
</comment>
<comment type="catalytic activity">
    <reaction evidence="1">
        <text>adenosine(37) in tRNA + dimethylallyl diphosphate = N(6)-dimethylallyladenosine(37) in tRNA + diphosphate</text>
        <dbReference type="Rhea" id="RHEA:26482"/>
        <dbReference type="Rhea" id="RHEA-COMP:10162"/>
        <dbReference type="Rhea" id="RHEA-COMP:10375"/>
        <dbReference type="ChEBI" id="CHEBI:33019"/>
        <dbReference type="ChEBI" id="CHEBI:57623"/>
        <dbReference type="ChEBI" id="CHEBI:74411"/>
        <dbReference type="ChEBI" id="CHEBI:74415"/>
        <dbReference type="EC" id="2.5.1.75"/>
    </reaction>
</comment>
<comment type="cofactor">
    <cofactor evidence="1">
        <name>Mg(2+)</name>
        <dbReference type="ChEBI" id="CHEBI:18420"/>
    </cofactor>
</comment>
<comment type="subunit">
    <text evidence="1">Monomer.</text>
</comment>
<comment type="similarity">
    <text evidence="1">Belongs to the IPP transferase family.</text>
</comment>
<name>MIAA_STRP4</name>
<sequence>MKTKIIVIVGPTAVGKTALAIEVAKRFNGEVVSGDSQQVYRGLDIGTAKASPEEQAAVPHHLIDVREITESYSAFDFVSEAKMTIEDIHSRGKLAIIAGGTGLYIQSLLEGYHLGGETPHEEILAYRASLEPYSDXELAHLVEQAGLEIPQFNRRRAMRALEIAHFGQDLENQEILYEPLIICLDDERSQLYERINHRVDLMFEAGLLDEAKWLFDHSPNVQAAKGIGYKELFPYFRGEQTFEEARESLKQATRRFAKRQLTWFRNRMQVTFYQIGESGVQDRILSQIEEFLDD</sequence>
<evidence type="ECO:0000255" key="1">
    <source>
        <dbReference type="HAMAP-Rule" id="MF_00185"/>
    </source>
</evidence>
<protein>
    <recommendedName>
        <fullName evidence="1">tRNA dimethylallyltransferase</fullName>
        <ecNumber evidence="1">2.5.1.75</ecNumber>
    </recommendedName>
    <alternativeName>
        <fullName evidence="1">Dimethylallyl diphosphate:tRNA dimethylallyltransferase</fullName>
        <shortName evidence="1">DMAPP:tRNA dimethylallyltransferase</shortName>
        <shortName evidence="1">DMATase</shortName>
    </alternativeName>
    <alternativeName>
        <fullName evidence="1">Isopentenyl-diphosphate:tRNA isopentenyltransferase</fullName>
        <shortName evidence="1">IPP transferase</shortName>
        <shortName evidence="1">IPPT</shortName>
        <shortName evidence="1">IPTase</shortName>
    </alternativeName>
</protein>
<proteinExistence type="inferred from homology"/>
<keyword id="KW-0067">ATP-binding</keyword>
<keyword id="KW-0460">Magnesium</keyword>
<keyword id="KW-0547">Nucleotide-binding</keyword>
<keyword id="KW-0808">Transferase</keyword>
<keyword id="KW-0819">tRNA processing</keyword>
<organism>
    <name type="scientific">Streptococcus pneumoniae serotype 19F (strain G54)</name>
    <dbReference type="NCBI Taxonomy" id="512566"/>
    <lineage>
        <taxon>Bacteria</taxon>
        <taxon>Bacillati</taxon>
        <taxon>Bacillota</taxon>
        <taxon>Bacilli</taxon>
        <taxon>Lactobacillales</taxon>
        <taxon>Streptococcaceae</taxon>
        <taxon>Streptococcus</taxon>
    </lineage>
</organism>
<reference key="1">
    <citation type="journal article" date="2001" name="Microb. Drug Resist.">
        <title>Annotated draft genomic sequence from a Streptococcus pneumoniae type 19F clinical isolate.</title>
        <authorList>
            <person name="Dopazo J."/>
            <person name="Mendoza A."/>
            <person name="Herrero J."/>
            <person name="Caldara F."/>
            <person name="Humbert Y."/>
            <person name="Friedli L."/>
            <person name="Guerrier M."/>
            <person name="Grand-Schenk E."/>
            <person name="Gandin C."/>
            <person name="de Francesco M."/>
            <person name="Polissi A."/>
            <person name="Buell G."/>
            <person name="Feger G."/>
            <person name="Garcia E."/>
            <person name="Peitsch M."/>
            <person name="Garcia-Bustos J.F."/>
        </authorList>
    </citation>
    <scope>NUCLEOTIDE SEQUENCE [LARGE SCALE GENOMIC DNA]</scope>
    <source>
        <strain>G54</strain>
    </source>
</reference>
<reference key="2">
    <citation type="submission" date="2008-03" db="EMBL/GenBank/DDBJ databases">
        <title>Pneumococcal beta glucoside metabolism investigated by whole genome comparison.</title>
        <authorList>
            <person name="Mulas L."/>
            <person name="Trappetti C."/>
            <person name="Hakenbeck R."/>
            <person name="Iannelli F."/>
            <person name="Pozzi G."/>
            <person name="Davidsen T.M."/>
            <person name="Tettelin H."/>
            <person name="Oggioni M."/>
        </authorList>
    </citation>
    <scope>NUCLEOTIDE SEQUENCE [LARGE SCALE GENOMIC DNA]</scope>
    <source>
        <strain>G54</strain>
    </source>
</reference>
<dbReference type="EC" id="2.5.1.75" evidence="1"/>
<dbReference type="EMBL" id="CP001015">
    <property type="protein sequence ID" value="ACF55897.1"/>
    <property type="molecule type" value="Genomic_DNA"/>
</dbReference>
<dbReference type="KEGG" id="spx:SPG_0612"/>
<dbReference type="HOGENOM" id="CLU_032616_0_1_9"/>
<dbReference type="GO" id="GO:0005524">
    <property type="term" value="F:ATP binding"/>
    <property type="evidence" value="ECO:0007669"/>
    <property type="project" value="UniProtKB-UniRule"/>
</dbReference>
<dbReference type="GO" id="GO:0052381">
    <property type="term" value="F:tRNA dimethylallyltransferase activity"/>
    <property type="evidence" value="ECO:0007669"/>
    <property type="project" value="UniProtKB-UniRule"/>
</dbReference>
<dbReference type="GO" id="GO:0006400">
    <property type="term" value="P:tRNA modification"/>
    <property type="evidence" value="ECO:0007669"/>
    <property type="project" value="TreeGrafter"/>
</dbReference>
<dbReference type="Gene3D" id="3.40.50.300">
    <property type="entry name" value="P-loop containing nucleotide triphosphate hydrolases"/>
    <property type="match status" value="1"/>
</dbReference>
<dbReference type="HAMAP" id="MF_00185">
    <property type="entry name" value="IPP_trans"/>
    <property type="match status" value="1"/>
</dbReference>
<dbReference type="InterPro" id="IPR039657">
    <property type="entry name" value="Dimethylallyltransferase"/>
</dbReference>
<dbReference type="InterPro" id="IPR018022">
    <property type="entry name" value="IPT"/>
</dbReference>
<dbReference type="InterPro" id="IPR027417">
    <property type="entry name" value="P-loop_NTPase"/>
</dbReference>
<dbReference type="NCBIfam" id="TIGR00174">
    <property type="entry name" value="miaA"/>
    <property type="match status" value="1"/>
</dbReference>
<dbReference type="PANTHER" id="PTHR11088">
    <property type="entry name" value="TRNA DIMETHYLALLYLTRANSFERASE"/>
    <property type="match status" value="1"/>
</dbReference>
<dbReference type="PANTHER" id="PTHR11088:SF60">
    <property type="entry name" value="TRNA DIMETHYLALLYLTRANSFERASE"/>
    <property type="match status" value="1"/>
</dbReference>
<dbReference type="Pfam" id="PF01715">
    <property type="entry name" value="IPPT"/>
    <property type="match status" value="1"/>
</dbReference>
<dbReference type="SUPFAM" id="SSF52540">
    <property type="entry name" value="P-loop containing nucleoside triphosphate hydrolases"/>
    <property type="match status" value="2"/>
</dbReference>
<feature type="chain" id="PRO_1000098692" description="tRNA dimethylallyltransferase">
    <location>
        <begin position="1"/>
        <end position="294"/>
    </location>
</feature>
<feature type="region of interest" description="Interaction with substrate tRNA" evidence="1">
    <location>
        <begin position="35"/>
        <end position="38"/>
    </location>
</feature>
<feature type="binding site" evidence="1">
    <location>
        <begin position="10"/>
        <end position="17"/>
    </location>
    <ligand>
        <name>ATP</name>
        <dbReference type="ChEBI" id="CHEBI:30616"/>
    </ligand>
</feature>
<feature type="binding site" evidence="1">
    <location>
        <begin position="12"/>
        <end position="17"/>
    </location>
    <ligand>
        <name>substrate</name>
    </ligand>
</feature>
<feature type="site" description="Interaction with substrate tRNA" evidence="1">
    <location>
        <position position="101"/>
    </location>
</feature>
<feature type="site" description="Interaction with substrate tRNA" evidence="1">
    <location>
        <position position="127"/>
    </location>
</feature>